<name>RHGF_DROME</name>
<reference evidence="11" key="1">
    <citation type="journal article" date="2000" name="Science">
        <title>The genome sequence of Drosophila melanogaster.</title>
        <authorList>
            <person name="Adams M.D."/>
            <person name="Celniker S.E."/>
            <person name="Holt R.A."/>
            <person name="Evans C.A."/>
            <person name="Gocayne J.D."/>
            <person name="Amanatides P.G."/>
            <person name="Scherer S.E."/>
            <person name="Li P.W."/>
            <person name="Hoskins R.A."/>
            <person name="Galle R.F."/>
            <person name="George R.A."/>
            <person name="Lewis S.E."/>
            <person name="Richards S."/>
            <person name="Ashburner M."/>
            <person name="Henderson S.N."/>
            <person name="Sutton G.G."/>
            <person name="Wortman J.R."/>
            <person name="Yandell M.D."/>
            <person name="Zhang Q."/>
            <person name="Chen L.X."/>
            <person name="Brandon R.C."/>
            <person name="Rogers Y.-H.C."/>
            <person name="Blazej R.G."/>
            <person name="Champe M."/>
            <person name="Pfeiffer B.D."/>
            <person name="Wan K.H."/>
            <person name="Doyle C."/>
            <person name="Baxter E.G."/>
            <person name="Helt G."/>
            <person name="Nelson C.R."/>
            <person name="Miklos G.L.G."/>
            <person name="Abril J.F."/>
            <person name="Agbayani A."/>
            <person name="An H.-J."/>
            <person name="Andrews-Pfannkoch C."/>
            <person name="Baldwin D."/>
            <person name="Ballew R.M."/>
            <person name="Basu A."/>
            <person name="Baxendale J."/>
            <person name="Bayraktaroglu L."/>
            <person name="Beasley E.M."/>
            <person name="Beeson K.Y."/>
            <person name="Benos P.V."/>
            <person name="Berman B.P."/>
            <person name="Bhandari D."/>
            <person name="Bolshakov S."/>
            <person name="Borkova D."/>
            <person name="Botchan M.R."/>
            <person name="Bouck J."/>
            <person name="Brokstein P."/>
            <person name="Brottier P."/>
            <person name="Burtis K.C."/>
            <person name="Busam D.A."/>
            <person name="Butler H."/>
            <person name="Cadieu E."/>
            <person name="Center A."/>
            <person name="Chandra I."/>
            <person name="Cherry J.M."/>
            <person name="Cawley S."/>
            <person name="Dahlke C."/>
            <person name="Davenport L.B."/>
            <person name="Davies P."/>
            <person name="de Pablos B."/>
            <person name="Delcher A."/>
            <person name="Deng Z."/>
            <person name="Mays A.D."/>
            <person name="Dew I."/>
            <person name="Dietz S.M."/>
            <person name="Dodson K."/>
            <person name="Doup L.E."/>
            <person name="Downes M."/>
            <person name="Dugan-Rocha S."/>
            <person name="Dunkov B.C."/>
            <person name="Dunn P."/>
            <person name="Durbin K.J."/>
            <person name="Evangelista C.C."/>
            <person name="Ferraz C."/>
            <person name="Ferriera S."/>
            <person name="Fleischmann W."/>
            <person name="Fosler C."/>
            <person name="Gabrielian A.E."/>
            <person name="Garg N.S."/>
            <person name="Gelbart W.M."/>
            <person name="Glasser K."/>
            <person name="Glodek A."/>
            <person name="Gong F."/>
            <person name="Gorrell J.H."/>
            <person name="Gu Z."/>
            <person name="Guan P."/>
            <person name="Harris M."/>
            <person name="Harris N.L."/>
            <person name="Harvey D.A."/>
            <person name="Heiman T.J."/>
            <person name="Hernandez J.R."/>
            <person name="Houck J."/>
            <person name="Hostin D."/>
            <person name="Houston K.A."/>
            <person name="Howland T.J."/>
            <person name="Wei M.-H."/>
            <person name="Ibegwam C."/>
            <person name="Jalali M."/>
            <person name="Kalush F."/>
            <person name="Karpen G.H."/>
            <person name="Ke Z."/>
            <person name="Kennison J.A."/>
            <person name="Ketchum K.A."/>
            <person name="Kimmel B.E."/>
            <person name="Kodira C.D."/>
            <person name="Kraft C.L."/>
            <person name="Kravitz S."/>
            <person name="Kulp D."/>
            <person name="Lai Z."/>
            <person name="Lasko P."/>
            <person name="Lei Y."/>
            <person name="Levitsky A.A."/>
            <person name="Li J.H."/>
            <person name="Li Z."/>
            <person name="Liang Y."/>
            <person name="Lin X."/>
            <person name="Liu X."/>
            <person name="Mattei B."/>
            <person name="McIntosh T.C."/>
            <person name="McLeod M.P."/>
            <person name="McPherson D."/>
            <person name="Merkulov G."/>
            <person name="Milshina N.V."/>
            <person name="Mobarry C."/>
            <person name="Morris J."/>
            <person name="Moshrefi A."/>
            <person name="Mount S.M."/>
            <person name="Moy M."/>
            <person name="Murphy B."/>
            <person name="Murphy L."/>
            <person name="Muzny D.M."/>
            <person name="Nelson D.L."/>
            <person name="Nelson D.R."/>
            <person name="Nelson K.A."/>
            <person name="Nixon K."/>
            <person name="Nusskern D.R."/>
            <person name="Pacleb J.M."/>
            <person name="Palazzolo M."/>
            <person name="Pittman G.S."/>
            <person name="Pan S."/>
            <person name="Pollard J."/>
            <person name="Puri V."/>
            <person name="Reese M.G."/>
            <person name="Reinert K."/>
            <person name="Remington K."/>
            <person name="Saunders R.D.C."/>
            <person name="Scheeler F."/>
            <person name="Shen H."/>
            <person name="Shue B.C."/>
            <person name="Siden-Kiamos I."/>
            <person name="Simpson M."/>
            <person name="Skupski M.P."/>
            <person name="Smith T.J."/>
            <person name="Spier E."/>
            <person name="Spradling A.C."/>
            <person name="Stapleton M."/>
            <person name="Strong R."/>
            <person name="Sun E."/>
            <person name="Svirskas R."/>
            <person name="Tector C."/>
            <person name="Turner R."/>
            <person name="Venter E."/>
            <person name="Wang A.H."/>
            <person name="Wang X."/>
            <person name="Wang Z.-Y."/>
            <person name="Wassarman D.A."/>
            <person name="Weinstock G.M."/>
            <person name="Weissenbach J."/>
            <person name="Williams S.M."/>
            <person name="Woodage T."/>
            <person name="Worley K.C."/>
            <person name="Wu D."/>
            <person name="Yang S."/>
            <person name="Yao Q.A."/>
            <person name="Ye J."/>
            <person name="Yeh R.-F."/>
            <person name="Zaveri J.S."/>
            <person name="Zhan M."/>
            <person name="Zhang G."/>
            <person name="Zhao Q."/>
            <person name="Zheng L."/>
            <person name="Zheng X.H."/>
            <person name="Zhong F.N."/>
            <person name="Zhong W."/>
            <person name="Zhou X."/>
            <person name="Zhu S.C."/>
            <person name="Zhu X."/>
            <person name="Smith H.O."/>
            <person name="Gibbs R.A."/>
            <person name="Myers E.W."/>
            <person name="Rubin G.M."/>
            <person name="Venter J.C."/>
        </authorList>
    </citation>
    <scope>NUCLEOTIDE SEQUENCE [LARGE SCALE GENOMIC DNA]</scope>
    <source>
        <strain evidence="11">Berkeley</strain>
    </source>
</reference>
<reference evidence="11" key="2">
    <citation type="journal article" date="2002" name="Genome Biol.">
        <title>Annotation of the Drosophila melanogaster euchromatic genome: a systematic review.</title>
        <authorList>
            <person name="Misra S."/>
            <person name="Crosby M.A."/>
            <person name="Mungall C.J."/>
            <person name="Matthews B.B."/>
            <person name="Campbell K.S."/>
            <person name="Hradecky P."/>
            <person name="Huang Y."/>
            <person name="Kaminker J.S."/>
            <person name="Millburn G.H."/>
            <person name="Prochnik S.E."/>
            <person name="Smith C.D."/>
            <person name="Tupy J.L."/>
            <person name="Whitfield E.J."/>
            <person name="Bayraktaroglu L."/>
            <person name="Berman B.P."/>
            <person name="Bettencourt B.R."/>
            <person name="Celniker S.E."/>
            <person name="de Grey A.D.N.J."/>
            <person name="Drysdale R.A."/>
            <person name="Harris N.L."/>
            <person name="Richter J."/>
            <person name="Russo S."/>
            <person name="Schroeder A.J."/>
            <person name="Shu S.Q."/>
            <person name="Stapleton M."/>
            <person name="Yamada C."/>
            <person name="Ashburner M."/>
            <person name="Gelbart W.M."/>
            <person name="Rubin G.M."/>
            <person name="Lewis S.E."/>
        </authorList>
    </citation>
    <scope>GENOME REANNOTATION</scope>
    <source>
        <strain evidence="11">Berkeley</strain>
    </source>
</reference>
<reference evidence="9" key="3">
    <citation type="submission" date="2003-02" db="EMBL/GenBank/DDBJ databases">
        <authorList>
            <person name="Stapleton M."/>
            <person name="Brokstein P."/>
            <person name="Hong L."/>
            <person name="Agbayani A."/>
            <person name="Carlson J."/>
            <person name="Champe M."/>
            <person name="Chavez C."/>
            <person name="Dorsett V."/>
            <person name="Dresnek D."/>
            <person name="Farfan D."/>
            <person name="Frise E."/>
            <person name="George R."/>
            <person name="Gonzalez M."/>
            <person name="Guarin H."/>
            <person name="Kronmiller B."/>
            <person name="Li P."/>
            <person name="Liao G."/>
            <person name="Miranda A."/>
            <person name="Mungall C.J."/>
            <person name="Nunoo J."/>
            <person name="Pacleb J."/>
            <person name="Paragas V."/>
            <person name="Park S."/>
            <person name="Patel S."/>
            <person name="Phouanenavong S."/>
            <person name="Wan K."/>
            <person name="Yu C."/>
            <person name="Lewis S.E."/>
            <person name="Rubin G.M."/>
            <person name="Celniker S."/>
        </authorList>
    </citation>
    <scope>NUCLEOTIDE SEQUENCE [LARGE SCALE MRNA] (ISOFORM A)</scope>
    <source>
        <strain evidence="9">Berkeley</strain>
        <tissue evidence="9">Embryo</tissue>
    </source>
</reference>
<reference evidence="8" key="4">
    <citation type="journal article" date="2017" name="Development">
        <title>Graf regulates hematopoiesis through GEEC endocytosis of EGFR.</title>
        <authorList>
            <person name="Kim S."/>
            <person name="Nahm M."/>
            <person name="Kim N."/>
            <person name="Kwon Y."/>
            <person name="Kim J."/>
            <person name="Choi S."/>
            <person name="Choi E.Y."/>
            <person name="Shim J."/>
            <person name="Lee C."/>
            <person name="Lee S."/>
        </authorList>
    </citation>
    <scope>FUNCTION</scope>
    <scope>INTERACTION WITH EGFR</scope>
    <scope>SUBCELLULAR LOCATION</scope>
    <scope>DEVELOPMENTAL STAGE</scope>
    <scope>DISRUPTION PHENOTYPE</scope>
</reference>
<reference evidence="8" key="5">
    <citation type="journal article" date="2021" name="Elife">
        <title>Spatiotemporal recruitment of RhoGTPase protein GRAF inhibits actomyosin ring constriction in Drosophila cellularization.</title>
        <authorList>
            <person name="Sharma S."/>
            <person name="Rikhy R."/>
        </authorList>
    </citation>
    <scope>FUNCTION</scope>
    <scope>SUBCELLULAR LOCATION</scope>
    <scope>DOMAIN</scope>
    <scope>DISRUPTION PHENOTYPE</scope>
    <scope>MUTAGENESIS OF 28-GLU--HIS-1025 AND 393-PRO--ILE-588</scope>
</reference>
<reference evidence="8" key="6">
    <citation type="journal article" date="2021" name="Mol. Brain">
        <title>Drosophila Graf regulates mushroom body beta-axon extension and olfactory long-term memory.</title>
        <authorList>
            <person name="Kim S."/>
            <person name="Kim J."/>
            <person name="Park S."/>
            <person name="Park J.J."/>
            <person name="Lee S."/>
        </authorList>
    </citation>
    <scope>FUNCTION</scope>
    <scope>TISSUE SPECIFICITY</scope>
    <scope>DISRUPTION PHENOTYPE</scope>
</reference>
<proteinExistence type="evidence at protein level"/>
<sequence length="1025" mass="115670">MGGGKNVRRGLEPLEFEECIVDSPDFRENLNRHEKELDHTSHQIKRIIKEVKDLMSAAKILSTRMKQLAILLNDFNFECIGTAQTDDENVICESLKRFGAIIGNIEDEREKMLTLADKHIIESLEDFRKKQIGGVKENKKKFDKKTEKFCQSQERFLNMSTKKPENTIQEADASLGMHEREYIQESLSYVLRIQEVQERIKFEFVEILLAFISGWLVFYHTAHEQAEDHRDYLQDLRHKVQKTRENFEEAREKVTELKTKYMEKRTKPEEIFTKRGYLFLMEKSSILKISLLEPFKATWTKYYCTFKKQKREFTMLQFNQMNHNFTRPEARDDEKLTLFSCQRRASEFEKRFCFDLTFKEKPGVVYTFQALSEKDHRYWISAMDGTEPTYLAPGKIKVSEAYHLDEAGFMFIRRCIQVLEIRGLEDEGIYRKSGVGTKISKLLALGLNQKESDDVFVDDKYRDLMESNTIASALKMYLRNLNEPLMTYQYHSDFIEAAKQETLNQRVNEVHKLVYKLPQPNFQMLDMVICHLTDVSRKYEKNKMSVFNLGVVFGPTLLRPREESVAAILDIKFNNIVINILIDNYERIFKNKPSADIKLPDATKAPSIMYPSRSSPPTRMPRASQIGKAASTGAMGSSSNTAGNPMFLNQQKIYRVVSKTNCTEPTMSSSLQNIPNGDNYALGSNAMNSSGGAQCISLSPPMHMLNGILSPTIGSINNLHTISKNETSTRRYVPDTEIAPDYGIIGANNGGVTLQSHHAVPVSSTSNFRHPEYLMTTANPVTQSGSSSHIYTNTSSAGANSSNRISLSNVSPPNTAMRKERFLGSASGPQQHPPVQRGLHSYGQTKHYSPLMPTSTSSSNDSVCDSLSSNNGLGSSIVANSGNSGNVAQHLSARNTNDYALISSQNSSLSPHLGPTCDEVVTATTLPSVSLSCGGTASESTEYPPSKMHRNRDVNQIKRDLSTGTARVRTLYACMGESEGELSFEPNQIITNVRYSHEPGWLQGTLNGKTGLIPENYVEHLKPHH</sequence>
<keyword id="KW-0025">Alternative splicing</keyword>
<keyword id="KW-0175">Coiled coil</keyword>
<keyword id="KW-0963">Cytoplasm</keyword>
<keyword id="KW-0968">Cytoplasmic vesicle</keyword>
<keyword id="KW-0343">GTPase activation</keyword>
<keyword id="KW-1185">Reference proteome</keyword>
<keyword id="KW-0728">SH3 domain</keyword>
<organism evidence="11">
    <name type="scientific">Drosophila melanogaster</name>
    <name type="common">Fruit fly</name>
    <dbReference type="NCBI Taxonomy" id="7227"/>
    <lineage>
        <taxon>Eukaryota</taxon>
        <taxon>Metazoa</taxon>
        <taxon>Ecdysozoa</taxon>
        <taxon>Arthropoda</taxon>
        <taxon>Hexapoda</taxon>
        <taxon>Insecta</taxon>
        <taxon>Pterygota</taxon>
        <taxon>Neoptera</taxon>
        <taxon>Endopterygota</taxon>
        <taxon>Diptera</taxon>
        <taxon>Brachycera</taxon>
        <taxon>Muscomorpha</taxon>
        <taxon>Ephydroidea</taxon>
        <taxon>Drosophilidae</taxon>
        <taxon>Drosophila</taxon>
        <taxon>Sophophora</taxon>
    </lineage>
</organism>
<comment type="function">
    <text evidence="5 6 7">GTPase-activating protein for Rho family proteins (PubMed:33835025). Essential component of the CLIC (clathrin-independent carrier)/GEEC (GPI-anchored protein-enriched early endocytic compartment) endocytic pathway (PubMed:28993397). During hematopoiesis, inhibits Egfr-ras-MAPK signaling by promoting Spi-induced Egfr internalization through CLIC/GEEC endocytosis, thereby preventing plasmatocyte overproliferation (PubMed:28993397). Essential for normal mushroom body (MB) development and consequently the formation of olfactory long-term memories (PubMed:33892766). During MD development, required to stop the MB beta-lobe from crossing the brain midline, possibly acting via its role in the CLIC/GEEC endocytic pathway to down-regulate the Egfr-ras-MAPK signaling at the tip of the beta-lobes (PubMed:33892766). Required during embryo cellularization for maintaining and regulating the rate of actomyosin ring constriction (PubMed:33835025). During cellularization, inhibits Rho-GTP levels at the furrow canal tip in a spatiotemporal manner, thus delaying the onset of actomyosin contraction and ensuring appropriate closure of the cells at the base of nuclei after membrane extension (PubMed:33835025).</text>
</comment>
<comment type="subunit">
    <text evidence="5">Interacts with Egfr (when ubiquitinated).</text>
</comment>
<comment type="subcellular location">
    <subcellularLocation>
        <location evidence="6">Cytoplasm</location>
        <location evidence="6">Cytosol</location>
    </subcellularLocation>
    <subcellularLocation>
        <location evidence="5">Cytoplasm</location>
    </subcellularLocation>
    <subcellularLocation>
        <location evidence="5">Cytoplasmic vesicle</location>
    </subcellularLocation>
    <text evidence="5 6">During embryonic cellularization, detected at the furrow canal tips with enrichment at the edges (PubMed:33835025). Recruited to the furrow tips at early cellularization, expression levels are highest during mid-cellularization but then decrease at late cellularization when it becomes predominately cytosolic (PubMed:33835025). In embryos and larvae, displays a punctate localization in the cytoplasm of plasmatocytes (PubMed:28993397). In larvae, also displays a punctate localization in hemolymph crystal cells (PubMed:28993397). During Egfr internalization, localizes with Egfr and spi, to punctate or tubular structures connected to the cell surface (PubMed:28993397).</text>
</comment>
<comment type="alternative products">
    <event type="alternative splicing"/>
    <isoform>
        <id>X2JDY8-1</id>
        <name evidence="10">G</name>
        <name evidence="10">H</name>
        <name evidence="10">I</name>
        <sequence type="displayed"/>
    </isoform>
    <isoform>
        <id>X2JDY8-2</id>
        <name evidence="10">A</name>
        <name evidence="10">D</name>
        <name evidence="10">E</name>
        <name evidence="10">J</name>
        <sequence type="described" ref="VSP_061214"/>
    </isoform>
</comment>
<comment type="tissue specificity">
    <text evidence="7">In the adult brain, expressed in the antennal lobe, the subesophageal ganglion and the alpha/beta neurons of the mushroom body.</text>
</comment>
<comment type="developmental stage">
    <text evidence="5">In the larval primary lymph gland, expressed throughout the medullary and cortical zones (at protein level). Also detected in larval and embryo plasmatocytes (at protein level).</text>
</comment>
<comment type="domain">
    <text evidence="6">The Rho-GAP domain is necessary for inhibiting contractile ring constriction during cellularization.</text>
</comment>
<comment type="disruption phenotype">
    <text evidence="5 6 7">RNAi-mediated knockdown in embryos is lethal at 24 hr, likely due to defective cellularization (PubMed:33835025). During cellularization, the F-actin network at the base of the furrow canal is unorganized, the furrow tips contain wavy edges and there is a loss of contact between adjacent furrow tips (PubMed:33835025). Actomyosin ring constriction is enhanced, and the nuclei have a bottleneck appearance likely due to premature constriction at the furrow canal tip during the mid cellularization stage (PubMed:33835025). Another study reports that flies are viable and fertile (PubMed:28993397). RNAi-mediated knockdown in the alpha/beta neurons of the adult mushroom body (MB), results in abnormal crossing of the MB beta lobe over the brain midline (PubMed:33892766).</text>
</comment>
<comment type="sequence caution" evidence="8">
    <conflict type="frameshift">
        <sequence resource="EMBL-CDS" id="AAO39581"/>
    </conflict>
</comment>
<protein>
    <recommendedName>
        <fullName evidence="8">Rho GTPase-activating protein Graf</fullName>
    </recommendedName>
    <alternativeName>
        <fullName evidence="10">GTPase regulator associated with focal adhesion kinase</fullName>
    </alternativeName>
</protein>
<accession>X2JDY8</accession>
<accession>Q86NY4</accession>
<accession>Q9VXQ2</accession>
<feature type="chain" id="PRO_0000453923" description="Rho GTPase-activating protein Graf">
    <location>
        <begin position="1"/>
        <end position="1025"/>
    </location>
</feature>
<feature type="domain" description="PH" evidence="1">
    <location>
        <begin position="271"/>
        <end position="388"/>
    </location>
</feature>
<feature type="domain" description="Rho-GAP" evidence="2">
    <location>
        <begin position="402"/>
        <end position="589"/>
    </location>
</feature>
<feature type="domain" description="SH3" evidence="3">
    <location>
        <begin position="963"/>
        <end position="1023"/>
    </location>
</feature>
<feature type="region of interest" description="Disordered" evidence="4">
    <location>
        <begin position="824"/>
        <end position="866"/>
    </location>
</feature>
<feature type="compositionally biased region" description="Low complexity" evidence="4">
    <location>
        <begin position="854"/>
        <end position="866"/>
    </location>
</feature>
<feature type="site" description="Arginine finger; crucial for GTP hydrolysis by stabilizing the transition state" evidence="2">
    <location>
        <position position="431"/>
    </location>
</feature>
<feature type="splice variant" id="VSP_061214" description="In isoform A.">
    <original>SSILKISLLE</original>
    <variation>K</variation>
    <location>
        <begin position="284"/>
        <end position="293"/>
    </location>
</feature>
<feature type="mutagenesis site" description="In Graf-CR57; semi-embryonic lethal, with 71% of embryos dying at 24 hr. Displays cellularization defects including the loss of polygonal F-actin architecture and premature actomyosin ring formation during early cellularization, and enhanced ring constriction during mid and late cellularization. Nuclei also have a bottleneck appearance likely due to the premature ring constriction at the furrow canal tip the mid cellularization stage." evidence="6">
    <location>
        <begin position="28"/>
        <end position="1025"/>
    </location>
</feature>
<feature type="mutagenesis site" description="During cellularization, unable to rescue increased ring constriction in Graf-CR57 mutants." evidence="6">
    <location>
        <begin position="393"/>
        <end position="588"/>
    </location>
</feature>
<dbReference type="EMBL" id="AE014298">
    <property type="protein sequence ID" value="AAF48506.3"/>
    <property type="molecule type" value="Genomic_DNA"/>
</dbReference>
<dbReference type="EMBL" id="AE014298">
    <property type="protein sequence ID" value="AAS65342.1"/>
    <property type="molecule type" value="Genomic_DNA"/>
</dbReference>
<dbReference type="EMBL" id="AE014298">
    <property type="protein sequence ID" value="AAS65343.2"/>
    <property type="molecule type" value="Genomic_DNA"/>
</dbReference>
<dbReference type="EMBL" id="AE014298">
    <property type="protein sequence ID" value="AAS65344.1"/>
    <property type="molecule type" value="Genomic_DNA"/>
</dbReference>
<dbReference type="EMBL" id="AE014298">
    <property type="protein sequence ID" value="AAS65345.1"/>
    <property type="molecule type" value="Genomic_DNA"/>
</dbReference>
<dbReference type="EMBL" id="AE014298">
    <property type="protein sequence ID" value="AAS65346.2"/>
    <property type="molecule type" value="Genomic_DNA"/>
</dbReference>
<dbReference type="EMBL" id="AE014298">
    <property type="protein sequence ID" value="AHN59766.1"/>
    <property type="molecule type" value="Genomic_DNA"/>
</dbReference>
<dbReference type="EMBL" id="BT003577">
    <property type="protein sequence ID" value="AAO39581.1"/>
    <property type="status" value="ALT_FRAME"/>
    <property type="molecule type" value="mRNA"/>
</dbReference>
<dbReference type="RefSeq" id="NP_001285296.1">
    <molecule id="X2JDY8-1"/>
    <property type="nucleotide sequence ID" value="NM_001298367.1"/>
</dbReference>
<dbReference type="RefSeq" id="NP_573070.2">
    <molecule id="X2JDY8-2"/>
    <property type="nucleotide sequence ID" value="NM_132842.3"/>
</dbReference>
<dbReference type="RefSeq" id="NP_996441.2">
    <molecule id="X2JDY8-1"/>
    <property type="nucleotide sequence ID" value="NM_206718.2"/>
</dbReference>
<dbReference type="RefSeq" id="NP_996442.1">
    <molecule id="X2JDY8-2"/>
    <property type="nucleotide sequence ID" value="NM_206719.2"/>
</dbReference>
<dbReference type="RefSeq" id="NP_996443.1">
    <molecule id="X2JDY8-2"/>
    <property type="nucleotide sequence ID" value="NM_206720.2"/>
</dbReference>
<dbReference type="RefSeq" id="NP_996444.2">
    <molecule id="X2JDY8-1"/>
    <property type="nucleotide sequence ID" value="NM_206721.2"/>
</dbReference>
<dbReference type="RefSeq" id="NP_996445.1">
    <molecule id="X2JDY8-2"/>
    <property type="nucleotide sequence ID" value="NM_206722.2"/>
</dbReference>
<dbReference type="SMR" id="X2JDY8"/>
<dbReference type="FunCoup" id="X2JDY8">
    <property type="interactions" value="693"/>
</dbReference>
<dbReference type="IntAct" id="X2JDY8">
    <property type="interactions" value="8"/>
</dbReference>
<dbReference type="STRING" id="7227.FBpp0309266"/>
<dbReference type="TCDB" id="9.A.1.2.1">
    <property type="family name" value="the non abc multidrug exporter (n-mde) family"/>
</dbReference>
<dbReference type="PaxDb" id="7227-FBpp0073979"/>
<dbReference type="EnsemblMetazoa" id="FBtr0074194">
    <molecule id="X2JDY8-2"/>
    <property type="protein sequence ID" value="FBpp0073979"/>
    <property type="gene ID" value="FBgn0030685"/>
</dbReference>
<dbReference type="EnsemblMetazoa" id="FBtr0074197">
    <molecule id="X2JDY8-2"/>
    <property type="protein sequence ID" value="FBpp0089212"/>
    <property type="gene ID" value="FBgn0030685"/>
</dbReference>
<dbReference type="EnsemblMetazoa" id="FBtr0074198">
    <molecule id="X2JDY8-2"/>
    <property type="protein sequence ID" value="FBpp0089213"/>
    <property type="gene ID" value="FBgn0030685"/>
</dbReference>
<dbReference type="EnsemblMetazoa" id="FBtr0340305">
    <molecule id="X2JDY8-1"/>
    <property type="protein sequence ID" value="FBpp0309266"/>
    <property type="gene ID" value="FBgn0030685"/>
</dbReference>
<dbReference type="EnsemblMetazoa" id="FBtr0340306">
    <molecule id="X2JDY8-1"/>
    <property type="protein sequence ID" value="FBpp0309267"/>
    <property type="gene ID" value="FBgn0030685"/>
</dbReference>
<dbReference type="EnsemblMetazoa" id="FBtr0340307">
    <molecule id="X2JDY8-1"/>
    <property type="protein sequence ID" value="FBpp0309268"/>
    <property type="gene ID" value="FBgn0030685"/>
</dbReference>
<dbReference type="EnsemblMetazoa" id="FBtr0345133">
    <molecule id="X2JDY8-2"/>
    <property type="protein sequence ID" value="FBpp0311354"/>
    <property type="gene ID" value="FBgn0030685"/>
</dbReference>
<dbReference type="GeneID" id="32522"/>
<dbReference type="KEGG" id="dme:Dmel_CG8948"/>
<dbReference type="UCSC" id="CG8948-RA">
    <property type="organism name" value="d. melanogaster"/>
</dbReference>
<dbReference type="AGR" id="FB:FBgn0030685"/>
<dbReference type="CTD" id="32522"/>
<dbReference type="FlyBase" id="FBgn0030685">
    <property type="gene designation" value="Graf"/>
</dbReference>
<dbReference type="VEuPathDB" id="VectorBase:FBgn0030685"/>
<dbReference type="eggNOG" id="KOG1451">
    <property type="taxonomic scope" value="Eukaryota"/>
</dbReference>
<dbReference type="GeneTree" id="ENSGT00940000168384"/>
<dbReference type="HOGENOM" id="CLU_011532_2_0_1"/>
<dbReference type="InParanoid" id="X2JDY8"/>
<dbReference type="OMA" id="AXIFNTV"/>
<dbReference type="OrthoDB" id="3183924at2759"/>
<dbReference type="Reactome" id="R-DME-8980692">
    <property type="pathway name" value="RHOA GTPase cycle"/>
</dbReference>
<dbReference type="Reactome" id="R-DME-9013026">
    <property type="pathway name" value="RHOB GTPase cycle"/>
</dbReference>
<dbReference type="Reactome" id="R-DME-9013148">
    <property type="pathway name" value="CDC42 GTPase cycle"/>
</dbReference>
<dbReference type="Reactome" id="R-DME-9013149">
    <property type="pathway name" value="RAC1 GTPase cycle"/>
</dbReference>
<dbReference type="Reactome" id="R-DME-9013404">
    <property type="pathway name" value="RAC2 GTPase cycle"/>
</dbReference>
<dbReference type="Reactome" id="R-DME-9013405">
    <property type="pathway name" value="RHOD GTPase cycle"/>
</dbReference>
<dbReference type="Reactome" id="R-DME-9013406">
    <property type="pathway name" value="RHOQ GTPase cycle"/>
</dbReference>
<dbReference type="Reactome" id="R-DME-9013408">
    <property type="pathway name" value="RHOG GTPase cycle"/>
</dbReference>
<dbReference type="Reactome" id="R-DME-9013409">
    <property type="pathway name" value="RHOJ GTPase cycle"/>
</dbReference>
<dbReference type="Reactome" id="R-DME-9013423">
    <property type="pathway name" value="RAC3 GTPase cycle"/>
</dbReference>
<dbReference type="BioGRID-ORCS" id="32522">
    <property type="hits" value="0 hits in 3 CRISPR screens"/>
</dbReference>
<dbReference type="ChiTaRS" id="Graf">
    <property type="organism name" value="fly"/>
</dbReference>
<dbReference type="GenomeRNAi" id="32522"/>
<dbReference type="PRO" id="PR:X2JDY8"/>
<dbReference type="Proteomes" id="UP000000803">
    <property type="component" value="Chromosome X"/>
</dbReference>
<dbReference type="Bgee" id="FBgn0030685">
    <property type="expression patterns" value="Expressed in distal medullary amacrine neuron Dm11 in insect head and 273 other cell types or tissues"/>
</dbReference>
<dbReference type="ExpressionAtlas" id="X2JDY8">
    <property type="expression patterns" value="baseline and differential"/>
</dbReference>
<dbReference type="GO" id="GO:1903144">
    <property type="term" value="C:actomyosin contractile ring actin filament"/>
    <property type="evidence" value="ECO:0000314"/>
    <property type="project" value="UniProtKB"/>
</dbReference>
<dbReference type="GO" id="GO:0110071">
    <property type="term" value="C:cellularization cleavage furrow invagination front"/>
    <property type="evidence" value="ECO:0000314"/>
    <property type="project" value="UniProtKB"/>
</dbReference>
<dbReference type="GO" id="GO:0031410">
    <property type="term" value="C:cytoplasmic vesicle"/>
    <property type="evidence" value="ECO:0000314"/>
    <property type="project" value="FlyBase"/>
</dbReference>
<dbReference type="GO" id="GO:0005829">
    <property type="term" value="C:cytosol"/>
    <property type="evidence" value="ECO:0000314"/>
    <property type="project" value="UniProtKB"/>
</dbReference>
<dbReference type="GO" id="GO:0005096">
    <property type="term" value="F:GTPase activator activity"/>
    <property type="evidence" value="ECO:0000315"/>
    <property type="project" value="UniProtKB"/>
</dbReference>
<dbReference type="GO" id="GO:0005543">
    <property type="term" value="F:phospholipid binding"/>
    <property type="evidence" value="ECO:0000250"/>
    <property type="project" value="FlyBase"/>
</dbReference>
<dbReference type="GO" id="GO:0140036">
    <property type="term" value="F:ubiquitin-modified protein reader activity"/>
    <property type="evidence" value="ECO:0000314"/>
    <property type="project" value="FlyBase"/>
</dbReference>
<dbReference type="GO" id="GO:0036089">
    <property type="term" value="P:cleavage furrow formation"/>
    <property type="evidence" value="ECO:0000315"/>
    <property type="project" value="UniProtKB"/>
</dbReference>
<dbReference type="GO" id="GO:0042059">
    <property type="term" value="P:negative regulation of epidermal growth factor receptor signaling pathway"/>
    <property type="evidence" value="ECO:0000315"/>
    <property type="project" value="FlyBase"/>
</dbReference>
<dbReference type="GO" id="GO:0002092">
    <property type="term" value="P:positive regulation of receptor internalization"/>
    <property type="evidence" value="ECO:0000315"/>
    <property type="project" value="FlyBase"/>
</dbReference>
<dbReference type="GO" id="GO:0031991">
    <property type="term" value="P:regulation of actomyosin contractile ring contraction"/>
    <property type="evidence" value="ECO:0000315"/>
    <property type="project" value="UniProtKB"/>
</dbReference>
<dbReference type="GO" id="GO:0007266">
    <property type="term" value="P:Rho protein signal transduction"/>
    <property type="evidence" value="ECO:0000255"/>
    <property type="project" value="FlyBase"/>
</dbReference>
<dbReference type="GO" id="GO:0110069">
    <property type="term" value="P:syncytial embryo cellularization"/>
    <property type="evidence" value="ECO:0000315"/>
    <property type="project" value="UniProtKB"/>
</dbReference>
<dbReference type="CDD" id="cd01249">
    <property type="entry name" value="BAR-PH_GRAF_family"/>
    <property type="match status" value="1"/>
</dbReference>
<dbReference type="CDD" id="cd07602">
    <property type="entry name" value="BAR_RhoGAP_OPHN1-like"/>
    <property type="match status" value="1"/>
</dbReference>
<dbReference type="CDD" id="cd11882">
    <property type="entry name" value="SH3_GRAF-like"/>
    <property type="match status" value="1"/>
</dbReference>
<dbReference type="FunFam" id="2.30.29.30:FF:000411">
    <property type="entry name" value="Blast:Rho GTPase-activating protein 26"/>
    <property type="match status" value="1"/>
</dbReference>
<dbReference type="FunFam" id="1.10.555.10:FF:000006">
    <property type="entry name" value="Rho GTPase activating protein 26"/>
    <property type="match status" value="1"/>
</dbReference>
<dbReference type="FunFam" id="1.20.1270.60:FF:000001">
    <property type="entry name" value="Rho GTPase-activating protein 26"/>
    <property type="match status" value="1"/>
</dbReference>
<dbReference type="FunFam" id="2.30.30.40:FF:000055">
    <property type="entry name" value="rho GTPase-activating protein 26 isoform X1"/>
    <property type="match status" value="1"/>
</dbReference>
<dbReference type="Gene3D" id="1.20.1270.60">
    <property type="entry name" value="Arfaptin homology (AH) domain/BAR domain"/>
    <property type="match status" value="1"/>
</dbReference>
<dbReference type="Gene3D" id="2.30.29.30">
    <property type="entry name" value="Pleckstrin-homology domain (PH domain)/Phosphotyrosine-binding domain (PTB)"/>
    <property type="match status" value="1"/>
</dbReference>
<dbReference type="Gene3D" id="1.10.555.10">
    <property type="entry name" value="Rho GTPase activation protein"/>
    <property type="match status" value="1"/>
</dbReference>
<dbReference type="Gene3D" id="2.30.30.40">
    <property type="entry name" value="SH3 Domains"/>
    <property type="match status" value="1"/>
</dbReference>
<dbReference type="InterPro" id="IPR027267">
    <property type="entry name" value="AH/BAR_dom_sf"/>
</dbReference>
<dbReference type="InterPro" id="IPR004148">
    <property type="entry name" value="BAR_dom"/>
</dbReference>
<dbReference type="InterPro" id="IPR047234">
    <property type="entry name" value="GRAF_fam"/>
</dbReference>
<dbReference type="InterPro" id="IPR011993">
    <property type="entry name" value="PH-like_dom_sf"/>
</dbReference>
<dbReference type="InterPro" id="IPR001849">
    <property type="entry name" value="PH_domain"/>
</dbReference>
<dbReference type="InterPro" id="IPR047225">
    <property type="entry name" value="PH_GRAF"/>
</dbReference>
<dbReference type="InterPro" id="IPR008936">
    <property type="entry name" value="Rho_GTPase_activation_prot"/>
</dbReference>
<dbReference type="InterPro" id="IPR000198">
    <property type="entry name" value="RhoGAP_dom"/>
</dbReference>
<dbReference type="InterPro" id="IPR036028">
    <property type="entry name" value="SH3-like_dom_sf"/>
</dbReference>
<dbReference type="InterPro" id="IPR001452">
    <property type="entry name" value="SH3_domain"/>
</dbReference>
<dbReference type="PANTHER" id="PTHR12552">
    <property type="entry name" value="OLIGOPHRENIN 1"/>
    <property type="match status" value="1"/>
</dbReference>
<dbReference type="PANTHER" id="PTHR12552:SF1">
    <property type="entry name" value="RHO GTPASE-ACTIVATING PROTEIN GRAF"/>
    <property type="match status" value="1"/>
</dbReference>
<dbReference type="Pfam" id="PF16746">
    <property type="entry name" value="BAR_3"/>
    <property type="match status" value="1"/>
</dbReference>
<dbReference type="Pfam" id="PF00169">
    <property type="entry name" value="PH"/>
    <property type="match status" value="1"/>
</dbReference>
<dbReference type="Pfam" id="PF00620">
    <property type="entry name" value="RhoGAP"/>
    <property type="match status" value="1"/>
</dbReference>
<dbReference type="Pfam" id="PF14604">
    <property type="entry name" value="SH3_9"/>
    <property type="match status" value="1"/>
</dbReference>
<dbReference type="SMART" id="SM00324">
    <property type="entry name" value="RhoGAP"/>
    <property type="match status" value="1"/>
</dbReference>
<dbReference type="SMART" id="SM00326">
    <property type="entry name" value="SH3"/>
    <property type="match status" value="1"/>
</dbReference>
<dbReference type="SUPFAM" id="SSF103657">
    <property type="entry name" value="BAR/IMD domain-like"/>
    <property type="match status" value="1"/>
</dbReference>
<dbReference type="SUPFAM" id="SSF48350">
    <property type="entry name" value="GTPase activation domain, GAP"/>
    <property type="match status" value="1"/>
</dbReference>
<dbReference type="SUPFAM" id="SSF50729">
    <property type="entry name" value="PH domain-like"/>
    <property type="match status" value="1"/>
</dbReference>
<dbReference type="SUPFAM" id="SSF50044">
    <property type="entry name" value="SH3-domain"/>
    <property type="match status" value="1"/>
</dbReference>
<dbReference type="PROSITE" id="PS50003">
    <property type="entry name" value="PH_DOMAIN"/>
    <property type="match status" value="1"/>
</dbReference>
<dbReference type="PROSITE" id="PS50238">
    <property type="entry name" value="RHOGAP"/>
    <property type="match status" value="1"/>
</dbReference>
<dbReference type="PROSITE" id="PS50002">
    <property type="entry name" value="SH3"/>
    <property type="match status" value="1"/>
</dbReference>
<evidence type="ECO:0000255" key="1">
    <source>
        <dbReference type="PROSITE-ProRule" id="PRU00145"/>
    </source>
</evidence>
<evidence type="ECO:0000255" key="2">
    <source>
        <dbReference type="PROSITE-ProRule" id="PRU00172"/>
    </source>
</evidence>
<evidence type="ECO:0000255" key="3">
    <source>
        <dbReference type="PROSITE-ProRule" id="PRU00192"/>
    </source>
</evidence>
<evidence type="ECO:0000256" key="4">
    <source>
        <dbReference type="SAM" id="MobiDB-lite"/>
    </source>
</evidence>
<evidence type="ECO:0000269" key="5">
    <source>
    </source>
</evidence>
<evidence type="ECO:0000269" key="6">
    <source>
    </source>
</evidence>
<evidence type="ECO:0000269" key="7">
    <source>
    </source>
</evidence>
<evidence type="ECO:0000305" key="8"/>
<evidence type="ECO:0000312" key="9">
    <source>
        <dbReference type="EMBL" id="AAO39581.1"/>
    </source>
</evidence>
<evidence type="ECO:0000312" key="10">
    <source>
        <dbReference type="FlyBase" id="FBgn0030685"/>
    </source>
</evidence>
<evidence type="ECO:0000312" key="11">
    <source>
        <dbReference type="Proteomes" id="UP000000803"/>
    </source>
</evidence>
<gene>
    <name evidence="10" type="primary">Graf</name>
    <name evidence="10" type="ORF">CG8948</name>
</gene>